<sequence>MRIMASHDTPVSPAGILIDLDGTVFRGNELIEGAREAIKTLRRMGKKIVFLSNRGNISRAMCRKKLLGAGIETDVNDIVLSSSVTAAFLKKHYRFSKVWVLGEQGLVDELRLAGVQNASEPKEADWLVISLHETLTYDDLNQAFQAAAGGARIIATNKDRSFPNEDGNAIDVAGMIGAIETSAQAKTELVVGKPSWLMAEAACTAMGLSAHECMIIGDSIESDIAMGKLYGMKSALVLTGSAKQGEQRLYTPDYVLDSIKDVTKLAEEGILI</sequence>
<keyword id="KW-0378">Hydrolase</keyword>
<keyword id="KW-0460">Magnesium</keyword>
<keyword id="KW-0479">Metal-binding</keyword>
<keyword id="KW-1185">Reference proteome</keyword>
<comment type="function">
    <text evidence="2 3">Catalyzes the dephosphorylation of C5 and C6 carbon sugars in vitro (PubMed:21575135, PubMed:25848029). Catalyzes the dephosphorylation of 3'-AMP and phosphoserine in vitro (PubMed:25848029).</text>
</comment>
<comment type="catalytic activity">
    <reaction evidence="2 3">
        <text>sugar phosphate + H2O = sugar + phosphate.</text>
        <dbReference type="EC" id="3.1.3.23"/>
    </reaction>
</comment>
<comment type="catalytic activity">
    <reaction evidence="3">
        <text>O-phospho-L-serine + H2O = L-serine + phosphate</text>
        <dbReference type="Rhea" id="RHEA:21208"/>
        <dbReference type="ChEBI" id="CHEBI:15377"/>
        <dbReference type="ChEBI" id="CHEBI:33384"/>
        <dbReference type="ChEBI" id="CHEBI:43474"/>
        <dbReference type="ChEBI" id="CHEBI:57524"/>
        <dbReference type="EC" id="3.1.3.3"/>
    </reaction>
</comment>
<comment type="catalytic activity">
    <reaction evidence="3">
        <text>O-phospho-D-serine + H2O = D-serine + phosphate</text>
        <dbReference type="Rhea" id="RHEA:24873"/>
        <dbReference type="ChEBI" id="CHEBI:15377"/>
        <dbReference type="ChEBI" id="CHEBI:35247"/>
        <dbReference type="ChEBI" id="CHEBI:43474"/>
        <dbReference type="ChEBI" id="CHEBI:58680"/>
        <dbReference type="EC" id="3.1.3.3"/>
    </reaction>
</comment>
<comment type="cofactor">
    <cofactor evidence="2 3">
        <name>Mg(2+)</name>
        <dbReference type="ChEBI" id="CHEBI:18420"/>
    </cofactor>
</comment>
<comment type="biophysicochemical properties">
    <kinetics>
        <KM evidence="2">29.14 mM for D-xylulose 5-phosphate (at pH 7 and 37 degrees Celsius)</KM>
        <KM evidence="2">24.96 mM for glucose-6-phosphate (at pH 7 and 37 degrees Celsius)</KM>
        <KM evidence="2">27.36 mM for D-arabinose 5-phosphate (at pH 7 and 37 degrees Celsius)</KM>
        <KM evidence="2">34.89 mM for fructose 6-phosphate (at pH 7 and 37 degrees Celsius)</KM>
        <KM evidence="2">40.78 mM for fructose 1,6-bisphosphate (at pH 7 and 37 degrees Celsius)</KM>
        <KM evidence="2">40.74 mM for galactose 1-phosphate (at pH 7 and 37 degrees Celsius)</KM>
        <KM evidence="2">50 mM for 4-nitrophenyl phosphate (pNPP) (at pH 7 and 37 degrees Celsius)</KM>
    </kinetics>
    <phDependence>
        <text evidence="2">Optimum pH is 7 with 4-nitrophenyl phosphate as substrate.</text>
    </phDependence>
    <temperatureDependence>
        <text evidence="2">Optimum temperature is 65 degrees Celsius with 4-nitrophenyl phosphate as substrate.</text>
    </temperatureDependence>
</comment>
<comment type="induction">
    <text evidence="1">Transcription is repressed by glucose and by the binding of AraR to the operon promoter. L-arabinose acts as an inducer by inhibiting the binding of AraR to the DNA, thus allowing expression of the gene.</text>
</comment>
<comment type="similarity">
    <text evidence="5">Belongs to the HAD-like hydrolase superfamily.</text>
</comment>
<comment type="sequence caution" evidence="5">
    <conflict type="erroneous initiation">
        <sequence resource="EMBL-CDS" id="CAA61588"/>
    </conflict>
</comment>
<protein>
    <recommendedName>
        <fullName evidence="4">Sugar-phosphatase AraL</fullName>
        <ecNumber evidence="2 3">3.1.3.23</ecNumber>
    </recommendedName>
    <alternativeName>
        <fullName>Arabinose operon protein AraL</fullName>
    </alternativeName>
    <alternativeName>
        <fullName evidence="6">Phosphoserine phosphatase</fullName>
        <ecNumber evidence="3">3.1.3.3</ecNumber>
    </alternativeName>
</protein>
<proteinExistence type="evidence at protein level"/>
<gene>
    <name type="primary">araL</name>
    <name type="synonym">yseA</name>
    <name type="ordered locus">BSU28770</name>
</gene>
<reference key="1">
    <citation type="journal article" date="1997" name="Microbiology">
        <title>The Bacillus subtilis L-arabinose (ara) operon: nucleotide sequence, genetic organization and expression.</title>
        <authorList>
            <person name="Sa-Nogueira I.M.G."/>
            <person name="Nogueira T.V."/>
            <person name="Soares S."/>
            <person name="de Lencastre H."/>
        </authorList>
    </citation>
    <scope>NUCLEOTIDE SEQUENCE [GENOMIC DNA]</scope>
    <source>
        <strain>168</strain>
    </source>
</reference>
<reference key="2">
    <citation type="journal article" date="1996" name="Microbiology">
        <title>The dnaB-pheA (256 degrees-240 degrees) region of the Bacillus subtilis chromosome containing genes responsible for stress responses, the utilization of plant cell walls and primary metabolism.</title>
        <authorList>
            <person name="Wipat A."/>
            <person name="Carter N."/>
            <person name="Brignell C.S."/>
            <person name="Guy J.B."/>
            <person name="Piper K."/>
            <person name="Sanders J."/>
            <person name="Emmerson P.T."/>
            <person name="Harwood C.R."/>
        </authorList>
    </citation>
    <scope>NUCLEOTIDE SEQUENCE [GENOMIC DNA]</scope>
    <source>
        <strain>168</strain>
    </source>
</reference>
<reference key="3">
    <citation type="journal article" date="1997" name="Nature">
        <title>The complete genome sequence of the Gram-positive bacterium Bacillus subtilis.</title>
        <authorList>
            <person name="Kunst F."/>
            <person name="Ogasawara N."/>
            <person name="Moszer I."/>
            <person name="Albertini A.M."/>
            <person name="Alloni G."/>
            <person name="Azevedo V."/>
            <person name="Bertero M.G."/>
            <person name="Bessieres P."/>
            <person name="Bolotin A."/>
            <person name="Borchert S."/>
            <person name="Borriss R."/>
            <person name="Boursier L."/>
            <person name="Brans A."/>
            <person name="Braun M."/>
            <person name="Brignell S.C."/>
            <person name="Bron S."/>
            <person name="Brouillet S."/>
            <person name="Bruschi C.V."/>
            <person name="Caldwell B."/>
            <person name="Capuano V."/>
            <person name="Carter N.M."/>
            <person name="Choi S.-K."/>
            <person name="Codani J.-J."/>
            <person name="Connerton I.F."/>
            <person name="Cummings N.J."/>
            <person name="Daniel R.A."/>
            <person name="Denizot F."/>
            <person name="Devine K.M."/>
            <person name="Duesterhoeft A."/>
            <person name="Ehrlich S.D."/>
            <person name="Emmerson P.T."/>
            <person name="Entian K.-D."/>
            <person name="Errington J."/>
            <person name="Fabret C."/>
            <person name="Ferrari E."/>
            <person name="Foulger D."/>
            <person name="Fritz C."/>
            <person name="Fujita M."/>
            <person name="Fujita Y."/>
            <person name="Fuma S."/>
            <person name="Galizzi A."/>
            <person name="Galleron N."/>
            <person name="Ghim S.-Y."/>
            <person name="Glaser P."/>
            <person name="Goffeau A."/>
            <person name="Golightly E.J."/>
            <person name="Grandi G."/>
            <person name="Guiseppi G."/>
            <person name="Guy B.J."/>
            <person name="Haga K."/>
            <person name="Haiech J."/>
            <person name="Harwood C.R."/>
            <person name="Henaut A."/>
            <person name="Hilbert H."/>
            <person name="Holsappel S."/>
            <person name="Hosono S."/>
            <person name="Hullo M.-F."/>
            <person name="Itaya M."/>
            <person name="Jones L.-M."/>
            <person name="Joris B."/>
            <person name="Karamata D."/>
            <person name="Kasahara Y."/>
            <person name="Klaerr-Blanchard M."/>
            <person name="Klein C."/>
            <person name="Kobayashi Y."/>
            <person name="Koetter P."/>
            <person name="Koningstein G."/>
            <person name="Krogh S."/>
            <person name="Kumano M."/>
            <person name="Kurita K."/>
            <person name="Lapidus A."/>
            <person name="Lardinois S."/>
            <person name="Lauber J."/>
            <person name="Lazarevic V."/>
            <person name="Lee S.-M."/>
            <person name="Levine A."/>
            <person name="Liu H."/>
            <person name="Masuda S."/>
            <person name="Mauel C."/>
            <person name="Medigue C."/>
            <person name="Medina N."/>
            <person name="Mellado R.P."/>
            <person name="Mizuno M."/>
            <person name="Moestl D."/>
            <person name="Nakai S."/>
            <person name="Noback M."/>
            <person name="Noone D."/>
            <person name="O'Reilly M."/>
            <person name="Ogawa K."/>
            <person name="Ogiwara A."/>
            <person name="Oudega B."/>
            <person name="Park S.-H."/>
            <person name="Parro V."/>
            <person name="Pohl T.M."/>
            <person name="Portetelle D."/>
            <person name="Porwollik S."/>
            <person name="Prescott A.M."/>
            <person name="Presecan E."/>
            <person name="Pujic P."/>
            <person name="Purnelle B."/>
            <person name="Rapoport G."/>
            <person name="Rey M."/>
            <person name="Reynolds S."/>
            <person name="Rieger M."/>
            <person name="Rivolta C."/>
            <person name="Rocha E."/>
            <person name="Roche B."/>
            <person name="Rose M."/>
            <person name="Sadaie Y."/>
            <person name="Sato T."/>
            <person name="Scanlan E."/>
            <person name="Schleich S."/>
            <person name="Schroeter R."/>
            <person name="Scoffone F."/>
            <person name="Sekiguchi J."/>
            <person name="Sekowska A."/>
            <person name="Seror S.J."/>
            <person name="Serror P."/>
            <person name="Shin B.-S."/>
            <person name="Soldo B."/>
            <person name="Sorokin A."/>
            <person name="Tacconi E."/>
            <person name="Takagi T."/>
            <person name="Takahashi H."/>
            <person name="Takemaru K."/>
            <person name="Takeuchi M."/>
            <person name="Tamakoshi A."/>
            <person name="Tanaka T."/>
            <person name="Terpstra P."/>
            <person name="Tognoni A."/>
            <person name="Tosato V."/>
            <person name="Uchiyama S."/>
            <person name="Vandenbol M."/>
            <person name="Vannier F."/>
            <person name="Vassarotti A."/>
            <person name="Viari A."/>
            <person name="Wambutt R."/>
            <person name="Wedler E."/>
            <person name="Wedler H."/>
            <person name="Weitzenegger T."/>
            <person name="Winters P."/>
            <person name="Wipat A."/>
            <person name="Yamamoto H."/>
            <person name="Yamane K."/>
            <person name="Yasumoto K."/>
            <person name="Yata K."/>
            <person name="Yoshida K."/>
            <person name="Yoshikawa H.-F."/>
            <person name="Zumstein E."/>
            <person name="Yoshikawa H."/>
            <person name="Danchin A."/>
        </authorList>
    </citation>
    <scope>NUCLEOTIDE SEQUENCE [LARGE SCALE GENOMIC DNA]</scope>
    <source>
        <strain>168</strain>
    </source>
</reference>
<reference key="4">
    <citation type="journal article" date="1999" name="Mol. Microbiol.">
        <title>Mode of action of AraR, the key regulator of L-arabinose metabolism in Bacillus subtilis.</title>
        <authorList>
            <person name="Mota L.J."/>
            <person name="Tavares P."/>
            <person name="Sa-Nogueira I.M.G."/>
        </authorList>
    </citation>
    <scope>TRANSCRIPTIONAL REGULATION</scope>
</reference>
<reference key="5">
    <citation type="journal article" date="2011" name="FEBS J.">
        <title>Characterization and regulation of a bacterial sugar phosphatase of the haloalkanoate dehalogenase superfamily, AraL, from Bacillus subtilis.</title>
        <authorList>
            <person name="Godinho L.M."/>
            <person name="de Sa-Nogueira I."/>
        </authorList>
    </citation>
    <scope>FUNCTION</scope>
    <scope>COFACTOR</scope>
    <scope>BIOPHYSICOCHEMICAL PROPERTIES</scope>
</reference>
<reference key="6">
    <citation type="journal article" date="2015" name="Proc. Natl. Acad. Sci. U.S.A.">
        <title>Panoramic view of a superfamily of phosphatases through substrate profiling.</title>
        <authorList>
            <person name="Huang H."/>
            <person name="Pandya C."/>
            <person name="Liu C."/>
            <person name="Al-Obaidi N.F."/>
            <person name="Wang M."/>
            <person name="Zheng L."/>
            <person name="Toews Keating S."/>
            <person name="Aono M."/>
            <person name="Love J.D."/>
            <person name="Evans B."/>
            <person name="Seidel R.D."/>
            <person name="Hillerich B.S."/>
            <person name="Garforth S.J."/>
            <person name="Almo S.C."/>
            <person name="Mariano P.S."/>
            <person name="Dunaway-Mariano D."/>
            <person name="Allen K.N."/>
            <person name="Farelli J.D."/>
        </authorList>
    </citation>
    <scope>FUNCTION</scope>
    <scope>CATALYTIC ACTIVITY</scope>
    <scope>COFACTOR</scope>
</reference>
<feature type="chain" id="PRO_0000064658" description="Sugar-phosphatase AraL">
    <location>
        <begin position="1"/>
        <end position="272"/>
    </location>
</feature>
<evidence type="ECO:0000269" key="1">
    <source>
    </source>
</evidence>
<evidence type="ECO:0000269" key="2">
    <source>
    </source>
</evidence>
<evidence type="ECO:0000269" key="3">
    <source>
    </source>
</evidence>
<evidence type="ECO:0000303" key="4">
    <source>
    </source>
</evidence>
<evidence type="ECO:0000305" key="5"/>
<evidence type="ECO:0000305" key="6">
    <source>
    </source>
</evidence>
<organism>
    <name type="scientific">Bacillus subtilis (strain 168)</name>
    <dbReference type="NCBI Taxonomy" id="224308"/>
    <lineage>
        <taxon>Bacteria</taxon>
        <taxon>Bacillati</taxon>
        <taxon>Bacillota</taxon>
        <taxon>Bacilli</taxon>
        <taxon>Bacillales</taxon>
        <taxon>Bacillaceae</taxon>
        <taxon>Bacillus</taxon>
    </lineage>
</organism>
<name>ARAL_BACSU</name>
<accession>P94526</accession>
<dbReference type="EC" id="3.1.3.23" evidence="2 3"/>
<dbReference type="EC" id="3.1.3.3" evidence="3"/>
<dbReference type="EMBL" id="X89408">
    <property type="protein sequence ID" value="CAA61588.1"/>
    <property type="status" value="ALT_INIT"/>
    <property type="molecule type" value="Genomic_DNA"/>
</dbReference>
<dbReference type="EMBL" id="X89810">
    <property type="protein sequence ID" value="CAA61932.1"/>
    <property type="molecule type" value="Genomic_DNA"/>
</dbReference>
<dbReference type="EMBL" id="Z75208">
    <property type="protein sequence ID" value="CAA99590.1"/>
    <property type="molecule type" value="Genomic_DNA"/>
</dbReference>
<dbReference type="EMBL" id="AL009126">
    <property type="protein sequence ID" value="CAB14837.1"/>
    <property type="molecule type" value="Genomic_DNA"/>
</dbReference>
<dbReference type="PIR" id="G69587">
    <property type="entry name" value="G69587"/>
</dbReference>
<dbReference type="RefSeq" id="NP_390755.1">
    <property type="nucleotide sequence ID" value="NC_000964.3"/>
</dbReference>
<dbReference type="RefSeq" id="WP_010886590.1">
    <property type="nucleotide sequence ID" value="NZ_OZ025638.1"/>
</dbReference>
<dbReference type="SMR" id="P94526"/>
<dbReference type="FunCoup" id="P94526">
    <property type="interactions" value="61"/>
</dbReference>
<dbReference type="STRING" id="224308.BSU28770"/>
<dbReference type="jPOST" id="P94526"/>
<dbReference type="PaxDb" id="224308-BSU28770"/>
<dbReference type="DNASU" id="937431"/>
<dbReference type="EnsemblBacteria" id="CAB14837">
    <property type="protein sequence ID" value="CAB14837"/>
    <property type="gene ID" value="BSU_28770"/>
</dbReference>
<dbReference type="GeneID" id="937431"/>
<dbReference type="KEGG" id="bsu:BSU28770"/>
<dbReference type="PATRIC" id="fig|224308.43.peg.3011"/>
<dbReference type="eggNOG" id="COG0647">
    <property type="taxonomic scope" value="Bacteria"/>
</dbReference>
<dbReference type="InParanoid" id="P94526"/>
<dbReference type="OrthoDB" id="9810449at2"/>
<dbReference type="PhylomeDB" id="P94526"/>
<dbReference type="BioCyc" id="BSUB:BSU28770-MONOMER"/>
<dbReference type="Proteomes" id="UP000001570">
    <property type="component" value="Chromosome"/>
</dbReference>
<dbReference type="GO" id="GO:0005737">
    <property type="term" value="C:cytoplasm"/>
    <property type="evidence" value="ECO:0000318"/>
    <property type="project" value="GO_Central"/>
</dbReference>
<dbReference type="GO" id="GO:0036424">
    <property type="term" value="F:L-phosphoserine phosphatase activity"/>
    <property type="evidence" value="ECO:0007669"/>
    <property type="project" value="RHEA"/>
</dbReference>
<dbReference type="GO" id="GO:0046872">
    <property type="term" value="F:metal ion binding"/>
    <property type="evidence" value="ECO:0007669"/>
    <property type="project" value="UniProtKB-KW"/>
</dbReference>
<dbReference type="GO" id="GO:0016791">
    <property type="term" value="F:phosphatase activity"/>
    <property type="evidence" value="ECO:0000318"/>
    <property type="project" value="GO_Central"/>
</dbReference>
<dbReference type="GO" id="GO:0050308">
    <property type="term" value="F:sugar-phosphatase activity"/>
    <property type="evidence" value="ECO:0007669"/>
    <property type="project" value="UniProtKB-EC"/>
</dbReference>
<dbReference type="CDD" id="cd07531">
    <property type="entry name" value="HAD_Pase_UmpH-like"/>
    <property type="match status" value="1"/>
</dbReference>
<dbReference type="Gene3D" id="3.40.50.1000">
    <property type="entry name" value="HAD superfamily/HAD-like"/>
    <property type="match status" value="2"/>
</dbReference>
<dbReference type="InterPro" id="IPR036412">
    <property type="entry name" value="HAD-like_sf"/>
</dbReference>
<dbReference type="InterPro" id="IPR006357">
    <property type="entry name" value="HAD-SF_hydro_IIA"/>
</dbReference>
<dbReference type="InterPro" id="IPR023214">
    <property type="entry name" value="HAD_sf"/>
</dbReference>
<dbReference type="NCBIfam" id="TIGR01460">
    <property type="entry name" value="HAD-SF-IIA"/>
    <property type="match status" value="1"/>
</dbReference>
<dbReference type="PANTHER" id="PTHR19288">
    <property type="entry name" value="4-NITROPHENYLPHOSPHATASE-RELATED"/>
    <property type="match status" value="1"/>
</dbReference>
<dbReference type="PANTHER" id="PTHR19288:SF46">
    <property type="entry name" value="HALOACID DEHALOGENASE-LIKE HYDROLASE DOMAIN-CONTAINING PROTEIN 2"/>
    <property type="match status" value="1"/>
</dbReference>
<dbReference type="Pfam" id="PF13344">
    <property type="entry name" value="Hydrolase_6"/>
    <property type="match status" value="1"/>
</dbReference>
<dbReference type="Pfam" id="PF13242">
    <property type="entry name" value="Hydrolase_like"/>
    <property type="match status" value="1"/>
</dbReference>
<dbReference type="SUPFAM" id="SSF56784">
    <property type="entry name" value="HAD-like"/>
    <property type="match status" value="1"/>
</dbReference>